<keyword id="KW-0413">Isomerase</keyword>
<keyword id="KW-0819">tRNA processing</keyword>
<protein>
    <recommendedName>
        <fullName evidence="1">tRNA pseudouridine synthase B</fullName>
        <ecNumber evidence="1">5.4.99.25</ecNumber>
    </recommendedName>
    <alternativeName>
        <fullName evidence="1">tRNA pseudouridine(55) synthase</fullName>
        <shortName evidence="1">Psi55 synthase</shortName>
    </alternativeName>
    <alternativeName>
        <fullName evidence="1">tRNA pseudouridylate synthase</fullName>
    </alternativeName>
    <alternativeName>
        <fullName evidence="1">tRNA-uridine isomerase</fullName>
    </alternativeName>
</protein>
<name>TRUB_STRT1</name>
<reference key="1">
    <citation type="journal article" date="2004" name="Nat. Biotechnol.">
        <title>Complete sequence and comparative genome analysis of the dairy bacterium Streptococcus thermophilus.</title>
        <authorList>
            <person name="Bolotin A."/>
            <person name="Quinquis B."/>
            <person name="Renault P."/>
            <person name="Sorokin A."/>
            <person name="Ehrlich S.D."/>
            <person name="Kulakauskas S."/>
            <person name="Lapidus A."/>
            <person name="Goltsman E."/>
            <person name="Mazur M."/>
            <person name="Pusch G.D."/>
            <person name="Fonstein M."/>
            <person name="Overbeek R."/>
            <person name="Kyprides N."/>
            <person name="Purnelle B."/>
            <person name="Prozzi D."/>
            <person name="Ngui K."/>
            <person name="Masuy D."/>
            <person name="Hancy F."/>
            <person name="Burteau S."/>
            <person name="Boutry M."/>
            <person name="Delcour J."/>
            <person name="Goffeau A."/>
            <person name="Hols P."/>
        </authorList>
    </citation>
    <scope>NUCLEOTIDE SEQUENCE [LARGE SCALE GENOMIC DNA]</scope>
    <source>
        <strain>CNRZ 1066</strain>
    </source>
</reference>
<dbReference type="EC" id="5.4.99.25" evidence="1"/>
<dbReference type="EMBL" id="CP000024">
    <property type="protein sequence ID" value="AAV62573.1"/>
    <property type="molecule type" value="Genomic_DNA"/>
</dbReference>
<dbReference type="RefSeq" id="WP_011227200.1">
    <property type="nucleotide sequence ID" value="NC_006449.1"/>
</dbReference>
<dbReference type="SMR" id="Q5LZV2"/>
<dbReference type="KEGG" id="stc:str0995"/>
<dbReference type="HOGENOM" id="CLU_032087_0_1_9"/>
<dbReference type="GO" id="GO:0003723">
    <property type="term" value="F:RNA binding"/>
    <property type="evidence" value="ECO:0007669"/>
    <property type="project" value="InterPro"/>
</dbReference>
<dbReference type="GO" id="GO:0160148">
    <property type="term" value="F:tRNA pseudouridine(55) synthase activity"/>
    <property type="evidence" value="ECO:0007669"/>
    <property type="project" value="UniProtKB-EC"/>
</dbReference>
<dbReference type="GO" id="GO:1990481">
    <property type="term" value="P:mRNA pseudouridine synthesis"/>
    <property type="evidence" value="ECO:0007669"/>
    <property type="project" value="TreeGrafter"/>
</dbReference>
<dbReference type="GO" id="GO:0031119">
    <property type="term" value="P:tRNA pseudouridine synthesis"/>
    <property type="evidence" value="ECO:0007669"/>
    <property type="project" value="UniProtKB-UniRule"/>
</dbReference>
<dbReference type="CDD" id="cd02573">
    <property type="entry name" value="PseudoU_synth_EcTruB"/>
    <property type="match status" value="1"/>
</dbReference>
<dbReference type="FunFam" id="3.30.2350.10:FF:000011">
    <property type="entry name" value="tRNA pseudouridine synthase B"/>
    <property type="match status" value="1"/>
</dbReference>
<dbReference type="Gene3D" id="3.30.2350.10">
    <property type="entry name" value="Pseudouridine synthase"/>
    <property type="match status" value="1"/>
</dbReference>
<dbReference type="HAMAP" id="MF_01080">
    <property type="entry name" value="TruB_bact"/>
    <property type="match status" value="1"/>
</dbReference>
<dbReference type="InterPro" id="IPR020103">
    <property type="entry name" value="PsdUridine_synth_cat_dom_sf"/>
</dbReference>
<dbReference type="InterPro" id="IPR002501">
    <property type="entry name" value="PsdUridine_synth_N"/>
</dbReference>
<dbReference type="InterPro" id="IPR014780">
    <property type="entry name" value="tRNA_psdUridine_synth_TruB"/>
</dbReference>
<dbReference type="InterPro" id="IPR032819">
    <property type="entry name" value="TruB_C"/>
</dbReference>
<dbReference type="NCBIfam" id="TIGR00431">
    <property type="entry name" value="TruB"/>
    <property type="match status" value="1"/>
</dbReference>
<dbReference type="PANTHER" id="PTHR13767:SF2">
    <property type="entry name" value="PSEUDOURIDYLATE SYNTHASE TRUB1"/>
    <property type="match status" value="1"/>
</dbReference>
<dbReference type="PANTHER" id="PTHR13767">
    <property type="entry name" value="TRNA-PSEUDOURIDINE SYNTHASE"/>
    <property type="match status" value="1"/>
</dbReference>
<dbReference type="Pfam" id="PF16198">
    <property type="entry name" value="TruB_C_2"/>
    <property type="match status" value="1"/>
</dbReference>
<dbReference type="Pfam" id="PF01509">
    <property type="entry name" value="TruB_N"/>
    <property type="match status" value="1"/>
</dbReference>
<dbReference type="SUPFAM" id="SSF55120">
    <property type="entry name" value="Pseudouridine synthase"/>
    <property type="match status" value="1"/>
</dbReference>
<comment type="function">
    <text evidence="1">Responsible for synthesis of pseudouridine from uracil-55 in the psi GC loop of transfer RNAs.</text>
</comment>
<comment type="catalytic activity">
    <reaction evidence="1">
        <text>uridine(55) in tRNA = pseudouridine(55) in tRNA</text>
        <dbReference type="Rhea" id="RHEA:42532"/>
        <dbReference type="Rhea" id="RHEA-COMP:10101"/>
        <dbReference type="Rhea" id="RHEA-COMP:10102"/>
        <dbReference type="ChEBI" id="CHEBI:65314"/>
        <dbReference type="ChEBI" id="CHEBI:65315"/>
        <dbReference type="EC" id="5.4.99.25"/>
    </reaction>
</comment>
<comment type="similarity">
    <text evidence="1">Belongs to the pseudouridine synthase TruB family. Type 1 subfamily.</text>
</comment>
<organism>
    <name type="scientific">Streptococcus thermophilus (strain CNRZ 1066)</name>
    <dbReference type="NCBI Taxonomy" id="299768"/>
    <lineage>
        <taxon>Bacteria</taxon>
        <taxon>Bacillati</taxon>
        <taxon>Bacillota</taxon>
        <taxon>Bacilli</taxon>
        <taxon>Lactobacillales</taxon>
        <taxon>Streptococcaceae</taxon>
        <taxon>Streptococcus</taxon>
    </lineage>
</organism>
<feature type="chain" id="PRO_0000121921" description="tRNA pseudouridine synthase B">
    <location>
        <begin position="1"/>
        <end position="293"/>
    </location>
</feature>
<feature type="active site" description="Nucleophile" evidence="1">
    <location>
        <position position="39"/>
    </location>
</feature>
<accession>Q5LZV2</accession>
<gene>
    <name evidence="1" type="primary">truB</name>
    <name type="ordered locus">str0995</name>
</gene>
<evidence type="ECO:0000255" key="1">
    <source>
        <dbReference type="HAMAP-Rule" id="MF_01080"/>
    </source>
</evidence>
<sequence length="293" mass="31866">MISGIINLKKEAGMTSHDAVFKLRKILHEKKIGHGGTLDPDVTGVLPIAVGKATRVIEYMTEAGKVYEGEITIGFSTTTEDASGEVVQTTPITELDGATVDQAMASFEGEITQIPPMYSAVKINGKKLYEYARAGEEVERPQRQVKITEFVRTSPIELENGTARFTFRVACSKGTYVRTLSVDLGVKLGFASHMSALRRTASAGLTLDSSLSLSQISEMVEAGDQSFLLPIEFGVQDLPAVQVTEDDAKEISFGRFISINSQEPLVAAFLGNKVLAIMEKRGQVYKPRKVLSQ</sequence>
<proteinExistence type="inferred from homology"/>